<sequence>MKRCTKLKILNTFSVDVYAEKVIIINDEYSLLQLWKQSRDQDKFFLILGAGSNVLFLENYKGIVLLNRIKGIFVTENKVAWYLHVGAGEEWNTLVMYTIKRNMPGLENLVCIPGYVGAALIQNIGAYGVELSQMCEYVDVLDLNQGDKIRLYCHECCFRYRESIFKLNLYKYAILFVGLRINKHWKPVLSYSGLTHLNLNSITPRQIINTIIFLRYKKLPNPIIHGNVGSFFKNPVVDFKVVSFLLKKYSNIPYYFQEDGKVKLLAGWLIENCNLKGYILGEASVYYKQALVLINTRQKATGTEIAALALYVYNKVVDKFNIRLKPEVRLIGSFGEINPKKLFLK</sequence>
<name>MURB_BLOFL</name>
<comment type="function">
    <text evidence="1">Cell wall formation.</text>
</comment>
<comment type="catalytic activity">
    <reaction evidence="1">
        <text>UDP-N-acetyl-alpha-D-muramate + NADP(+) = UDP-N-acetyl-3-O-(1-carboxyvinyl)-alpha-D-glucosamine + NADPH + H(+)</text>
        <dbReference type="Rhea" id="RHEA:12248"/>
        <dbReference type="ChEBI" id="CHEBI:15378"/>
        <dbReference type="ChEBI" id="CHEBI:57783"/>
        <dbReference type="ChEBI" id="CHEBI:58349"/>
        <dbReference type="ChEBI" id="CHEBI:68483"/>
        <dbReference type="ChEBI" id="CHEBI:70757"/>
        <dbReference type="EC" id="1.3.1.98"/>
    </reaction>
</comment>
<comment type="cofactor">
    <cofactor evidence="1">
        <name>FAD</name>
        <dbReference type="ChEBI" id="CHEBI:57692"/>
    </cofactor>
</comment>
<comment type="pathway">
    <text evidence="1">Cell wall biogenesis; peptidoglycan biosynthesis.</text>
</comment>
<comment type="subcellular location">
    <subcellularLocation>
        <location evidence="1">Cytoplasm</location>
    </subcellularLocation>
</comment>
<comment type="similarity">
    <text evidence="1">Belongs to the MurB family.</text>
</comment>
<organism>
    <name type="scientific">Blochmanniella floridana</name>
    <dbReference type="NCBI Taxonomy" id="203907"/>
    <lineage>
        <taxon>Bacteria</taxon>
        <taxon>Pseudomonadati</taxon>
        <taxon>Pseudomonadota</taxon>
        <taxon>Gammaproteobacteria</taxon>
        <taxon>Enterobacterales</taxon>
        <taxon>Enterobacteriaceae</taxon>
        <taxon>ant endosymbionts</taxon>
        <taxon>Candidatus Blochmanniella</taxon>
    </lineage>
</organism>
<dbReference type="EC" id="1.3.1.98" evidence="1"/>
<dbReference type="EMBL" id="BX248583">
    <property type="protein sequence ID" value="CAD83702.1"/>
    <property type="molecule type" value="Genomic_DNA"/>
</dbReference>
<dbReference type="SMR" id="Q7VQF2"/>
<dbReference type="STRING" id="203907.Bfl183"/>
<dbReference type="KEGG" id="bfl:Bfl183"/>
<dbReference type="eggNOG" id="COG0812">
    <property type="taxonomic scope" value="Bacteria"/>
</dbReference>
<dbReference type="HOGENOM" id="CLU_035304_0_0_6"/>
<dbReference type="OrthoDB" id="9804753at2"/>
<dbReference type="UniPathway" id="UPA00219"/>
<dbReference type="Proteomes" id="UP000002192">
    <property type="component" value="Chromosome"/>
</dbReference>
<dbReference type="GO" id="GO:0005829">
    <property type="term" value="C:cytosol"/>
    <property type="evidence" value="ECO:0007669"/>
    <property type="project" value="TreeGrafter"/>
</dbReference>
<dbReference type="GO" id="GO:0071949">
    <property type="term" value="F:FAD binding"/>
    <property type="evidence" value="ECO:0007669"/>
    <property type="project" value="InterPro"/>
</dbReference>
<dbReference type="GO" id="GO:0008762">
    <property type="term" value="F:UDP-N-acetylmuramate dehydrogenase activity"/>
    <property type="evidence" value="ECO:0007669"/>
    <property type="project" value="UniProtKB-UniRule"/>
</dbReference>
<dbReference type="GO" id="GO:0051301">
    <property type="term" value="P:cell division"/>
    <property type="evidence" value="ECO:0007669"/>
    <property type="project" value="UniProtKB-KW"/>
</dbReference>
<dbReference type="GO" id="GO:0071555">
    <property type="term" value="P:cell wall organization"/>
    <property type="evidence" value="ECO:0007669"/>
    <property type="project" value="UniProtKB-KW"/>
</dbReference>
<dbReference type="GO" id="GO:0009252">
    <property type="term" value="P:peptidoglycan biosynthetic process"/>
    <property type="evidence" value="ECO:0007669"/>
    <property type="project" value="UniProtKB-UniRule"/>
</dbReference>
<dbReference type="GO" id="GO:0008360">
    <property type="term" value="P:regulation of cell shape"/>
    <property type="evidence" value="ECO:0007669"/>
    <property type="project" value="UniProtKB-KW"/>
</dbReference>
<dbReference type="Gene3D" id="3.30.465.10">
    <property type="match status" value="1"/>
</dbReference>
<dbReference type="Gene3D" id="3.90.78.10">
    <property type="entry name" value="UDP-N-acetylenolpyruvoylglucosamine reductase, C-terminal domain"/>
    <property type="match status" value="1"/>
</dbReference>
<dbReference type="Gene3D" id="3.30.43.10">
    <property type="entry name" value="Uridine Diphospho-n-acetylenolpyruvylglucosamine Reductase, domain 2"/>
    <property type="match status" value="1"/>
</dbReference>
<dbReference type="HAMAP" id="MF_00037">
    <property type="entry name" value="MurB"/>
    <property type="match status" value="1"/>
</dbReference>
<dbReference type="InterPro" id="IPR016166">
    <property type="entry name" value="FAD-bd_PCMH"/>
</dbReference>
<dbReference type="InterPro" id="IPR036318">
    <property type="entry name" value="FAD-bd_PCMH-like_sf"/>
</dbReference>
<dbReference type="InterPro" id="IPR016167">
    <property type="entry name" value="FAD-bd_PCMH_sub1"/>
</dbReference>
<dbReference type="InterPro" id="IPR016169">
    <property type="entry name" value="FAD-bd_PCMH_sub2"/>
</dbReference>
<dbReference type="InterPro" id="IPR003170">
    <property type="entry name" value="MurB"/>
</dbReference>
<dbReference type="InterPro" id="IPR011601">
    <property type="entry name" value="MurB_C"/>
</dbReference>
<dbReference type="InterPro" id="IPR036635">
    <property type="entry name" value="MurB_C_sf"/>
</dbReference>
<dbReference type="InterPro" id="IPR006094">
    <property type="entry name" value="Oxid_FAD_bind_N"/>
</dbReference>
<dbReference type="NCBIfam" id="TIGR00179">
    <property type="entry name" value="murB"/>
    <property type="match status" value="1"/>
</dbReference>
<dbReference type="NCBIfam" id="NF000755">
    <property type="entry name" value="PRK00046.1"/>
    <property type="match status" value="1"/>
</dbReference>
<dbReference type="PANTHER" id="PTHR21071">
    <property type="entry name" value="UDP-N-ACETYLENOLPYRUVOYLGLUCOSAMINE REDUCTASE"/>
    <property type="match status" value="1"/>
</dbReference>
<dbReference type="PANTHER" id="PTHR21071:SF4">
    <property type="entry name" value="UDP-N-ACETYLENOLPYRUVOYLGLUCOSAMINE REDUCTASE"/>
    <property type="match status" value="1"/>
</dbReference>
<dbReference type="Pfam" id="PF01565">
    <property type="entry name" value="FAD_binding_4"/>
    <property type="match status" value="1"/>
</dbReference>
<dbReference type="Pfam" id="PF02873">
    <property type="entry name" value="MurB_C"/>
    <property type="match status" value="1"/>
</dbReference>
<dbReference type="SUPFAM" id="SSF56176">
    <property type="entry name" value="FAD-binding/transporter-associated domain-like"/>
    <property type="match status" value="1"/>
</dbReference>
<dbReference type="SUPFAM" id="SSF56194">
    <property type="entry name" value="Uridine diphospho-N-Acetylenolpyruvylglucosamine reductase, MurB, C-terminal domain"/>
    <property type="match status" value="1"/>
</dbReference>
<dbReference type="PROSITE" id="PS51387">
    <property type="entry name" value="FAD_PCMH"/>
    <property type="match status" value="1"/>
</dbReference>
<keyword id="KW-0131">Cell cycle</keyword>
<keyword id="KW-0132">Cell division</keyword>
<keyword id="KW-0133">Cell shape</keyword>
<keyword id="KW-0961">Cell wall biogenesis/degradation</keyword>
<keyword id="KW-0963">Cytoplasm</keyword>
<keyword id="KW-0274">FAD</keyword>
<keyword id="KW-0285">Flavoprotein</keyword>
<keyword id="KW-0521">NADP</keyword>
<keyword id="KW-0560">Oxidoreductase</keyword>
<keyword id="KW-0573">Peptidoglycan synthesis</keyword>
<keyword id="KW-1185">Reference proteome</keyword>
<protein>
    <recommendedName>
        <fullName evidence="1">UDP-N-acetylenolpyruvoylglucosamine reductase</fullName>
        <ecNumber evidence="1">1.3.1.98</ecNumber>
    </recommendedName>
    <alternativeName>
        <fullName evidence="1">UDP-N-acetylmuramate dehydrogenase</fullName>
    </alternativeName>
</protein>
<feature type="chain" id="PRO_0000179192" description="UDP-N-acetylenolpyruvoylglucosamine reductase">
    <location>
        <begin position="1"/>
        <end position="345"/>
    </location>
</feature>
<feature type="domain" description="FAD-binding PCMH-type" evidence="1">
    <location>
        <begin position="15"/>
        <end position="218"/>
    </location>
</feature>
<feature type="active site" evidence="1">
    <location>
        <position position="161"/>
    </location>
</feature>
<feature type="active site" description="Proton donor" evidence="1">
    <location>
        <position position="230"/>
    </location>
</feature>
<feature type="active site" evidence="1">
    <location>
        <position position="327"/>
    </location>
</feature>
<proteinExistence type="inferred from homology"/>
<evidence type="ECO:0000255" key="1">
    <source>
        <dbReference type="HAMAP-Rule" id="MF_00037"/>
    </source>
</evidence>
<accession>Q7VQF2</accession>
<reference key="1">
    <citation type="journal article" date="2003" name="Proc. Natl. Acad. Sci. U.S.A.">
        <title>The genome sequence of Blochmannia floridanus: comparative analysis of reduced genomes.</title>
        <authorList>
            <person name="Gil R."/>
            <person name="Silva F.J."/>
            <person name="Zientz E."/>
            <person name="Delmotte F."/>
            <person name="Gonzalez-Candelas F."/>
            <person name="Latorre A."/>
            <person name="Rausell C."/>
            <person name="Kamerbeek J."/>
            <person name="Gadau J."/>
            <person name="Hoelldobler B."/>
            <person name="van Ham R.C.H.J."/>
            <person name="Gross R."/>
            <person name="Moya A."/>
        </authorList>
    </citation>
    <scope>NUCLEOTIDE SEQUENCE [LARGE SCALE GENOMIC DNA]</scope>
</reference>
<gene>
    <name evidence="1" type="primary">murB</name>
    <name type="ordered locus">Bfl183</name>
</gene>